<keyword id="KW-0539">Nucleus</keyword>
<keyword id="KW-1185">Reference proteome</keyword>
<keyword id="KW-0677">Repeat</keyword>
<keyword id="KW-0687">Ribonucleoprotein</keyword>
<keyword id="KW-0690">Ribosome biogenesis</keyword>
<keyword id="KW-0698">rRNA processing</keyword>
<sequence length="1920" mass="214238">MVVPQKKFANGKRNDSTKSFKPMKKPFKKTKDDVAARSEAMALQLEDVPDFPRGGGTSLSKKEREKLYEEVDAEFDADERVSKKSKGGKSKKRIPSDLDDLGLLFGGGLHGKRPRYANKITTKNISPGMKLLGVVTEVNQKDIVISLPGGLRGLVRASEVSDFTDRGIEDDENELLGDIFSVGQLVPCIVLELDDDKKEAGKRKIWLSLRLSLLHKGFSFDSFQLGMVFSANVKSIEDHGSILHFGLPSITGFIEISDDGNQESGMKTGQLIQGVVTKIDRDRKIVHLSSDPDSVAKCLTKDLSGMSFDLLIPGMMVNARVQSVLENGILFDFLTYFNGTVDLFHLKNPLSNKSWKDEYNQNKTVNARILFIDPSSRAVGLTLSPHVVCNKAPPLHVFSGDIFDEAKVVRIDKSGLLLELPSKPTPTPAYVSTYDAAGDEVTKLEKKFKEGNHIRVRVLGLKQMEGLAVGTLKESAFEGPVFTHSDVKPGMVTKAKVISVDTFGAIVQFSGGLKAMCPLRHMSEFEVTKPRKKFKVGAELVFRVLGCKSKRITVTYKKTLVKSKLPILSSYTDATEGLVTHGWITKIEKHGCFVRFYNGVQGFVPRFELGLEPGSDPDSVFHVGEVVKCRVTSAVHGTQRITLSFMIKPSSVSEDDSIKLGSIVSGIIDTITSQAVIVRVKSKSVVKGTISAEHLADHHEQAKLIMSLLRPGYELDKLLVLDIEGNNMALSSKYSLIKLAEELPSDFNQLQPNSVVHGYVCNLIENGCFVRFLGRLTGFAPRSKAIDDPKADVSESFFVGQSVRANIVDVNQEKSRITLSLKQSSCASVDASFVQEYFLMDEKISDLQSSDITKSDCSWVEKFSIGSLIKGTIQEQNDLGVVVNFDNINNVLGFIPQHHMGGATLVPGSVVNAVVLDISRAERLVDLSLRPELLNNLTKEVSNSSKKKRKRGISKELEVHQRVSAVVEIVKEQHLVLSIPEHGYTIGYASVSDYNTQKLPVKQFSTGQSVVASVKAVQNPLTSGRLLLLLDSVSGTSETSRSKRAKKKSSCEVGSVVHAEITEIKPFELRVNFGNSFRGRIHITEVNDASTSDEPFAKFRVGQSISARVVAKPCHTDIKKTQLWELSVKPAMLKDSSEFNDTQESEQLEFAAGQCVIGYVYKVDKEWVWLAVSRNVTARIFILDTSCKAHELEEFERRFPIGKAVSGYVLTYNKEKKTLRLVQRPLLFIHKSIANGGGSKTDKPDSSIPGDDDTLFIHEGDILGGRISKILPGVGGLRVQLGPYVFGRVHFTEINDSWVPDPLDGFREGQFVKCKVLEISSSSKGTWQIELSLRTSLDGMSSADHLSEDLKNNDNVCKRFERIEDLSPDMGVQGYVKNTMSKGCFIILSRTVEAKVRLSNLCDTFVKEPEKEFPVGKLVTGRVLNVEPLSKRIEVTLKTVNAGGRPKSESYDLKKLHVGDMISGRIRRVEPFGLFIDIDQTGMVGLCHISQLSDDRMENVQARYKAGESVRAKILKLDEEKKRISLGMKSSYLMNGDDDKAQPLSEDNTSMECDPINDPKSEVLAAVDDFGFQETSGGTSLVLAQVESRASIPPLEVDLDDIEETDFDSSQNQEKLLGANKDEKSKRREKQKDKEEREKKIQAAEGRLLEHHAPENADEFEKLVRSSPNSSFVWIKYMAFMLSLADIEKARSIAERALRTINIREEEEKLNIWVAYFNLENEHGNPPEESVKKVFERARQYCDPKKVYLALLGVYERTEQYKLADKLLDEMIKKFKQSCKIWLRKIQSSLKQNEEAIQSVVNRALLCLPRHKHIKFISQTAILEFKCGVADRGRSLFEGVLREYPKRTDLWSVYLDQEIRLGEDDVIRSLFERAISLSLPPKKMKFLFKKFLEYEKSVGDEERVEYVKQRAMEYANSTLA</sequence>
<proteinExistence type="evidence at transcript level"/>
<name>RRP5_ARATH</name>
<organism>
    <name type="scientific">Arabidopsis thaliana</name>
    <name type="common">Mouse-ear cress</name>
    <dbReference type="NCBI Taxonomy" id="3702"/>
    <lineage>
        <taxon>Eukaryota</taxon>
        <taxon>Viridiplantae</taxon>
        <taxon>Streptophyta</taxon>
        <taxon>Embryophyta</taxon>
        <taxon>Tracheophyta</taxon>
        <taxon>Spermatophyta</taxon>
        <taxon>Magnoliopsida</taxon>
        <taxon>eudicotyledons</taxon>
        <taxon>Gunneridae</taxon>
        <taxon>Pentapetalae</taxon>
        <taxon>rosids</taxon>
        <taxon>malvids</taxon>
        <taxon>Brassicales</taxon>
        <taxon>Brassicaceae</taxon>
        <taxon>Camelineae</taxon>
        <taxon>Arabidopsis</taxon>
    </lineage>
</organism>
<comment type="function">
    <text evidence="4">Involved in the biogenesis of ribosomal RNA (rRNA). Required for the formation of 5.8S rRNA. Required for normal development of female gametophytes.</text>
</comment>
<comment type="subcellular location">
    <subcellularLocation>
        <location evidence="4">Nucleus</location>
        <location evidence="4">Nucleolus</location>
    </subcellularLocation>
</comment>
<comment type="tissue specificity">
    <text evidence="4">Highly expressed in flowers and at lower levels in roots, leaves, stems and siliques.</text>
</comment>
<comment type="disruption phenotype">
    <text evidence="4">Aborted development of female gametophytes.</text>
</comment>
<comment type="sequence caution" evidence="6">
    <conflict type="erroneous gene model prediction">
        <sequence resource="EMBL-CDS" id="AAF23213"/>
    </conflict>
</comment>
<comment type="sequence caution" evidence="6">
    <conflict type="erroneous gene model prediction">
        <sequence resource="EMBL-CDS" id="AAG51058"/>
    </conflict>
</comment>
<comment type="sequence caution" evidence="6">
    <conflict type="erroneous gene model prediction">
        <sequence resource="EMBL-CDS" id="AEE75131"/>
    </conflict>
</comment>
<comment type="sequence caution" evidence="6">
    <conflict type="erroneous gene model prediction">
        <sequence resource="EMBL-CDS" id="BAB03107"/>
    </conflict>
</comment>
<dbReference type="EMBL" id="AC016795">
    <property type="protein sequence ID" value="AAF23213.1"/>
    <property type="status" value="ALT_SEQ"/>
    <property type="molecule type" value="Genomic_DNA"/>
</dbReference>
<dbReference type="EMBL" id="AC069473">
    <property type="protein sequence ID" value="AAG51058.1"/>
    <property type="status" value="ALT_SEQ"/>
    <property type="molecule type" value="Genomic_DNA"/>
</dbReference>
<dbReference type="EMBL" id="AP002040">
    <property type="protein sequence ID" value="BAB03107.1"/>
    <property type="status" value="ALT_SEQ"/>
    <property type="molecule type" value="Genomic_DNA"/>
</dbReference>
<dbReference type="EMBL" id="CP002686">
    <property type="protein sequence ID" value="AEE75131.1"/>
    <property type="status" value="ALT_SEQ"/>
    <property type="molecule type" value="Genomic_DNA"/>
</dbReference>
<dbReference type="EMBL" id="CP002686">
    <property type="protein sequence ID" value="ANM64784.1"/>
    <property type="molecule type" value="Genomic_DNA"/>
</dbReference>
<dbReference type="RefSeq" id="NP_001326789.1">
    <property type="nucleotide sequence ID" value="NM_001337968.1"/>
</dbReference>
<dbReference type="RefSeq" id="NP_187803.4">
    <property type="nucleotide sequence ID" value="NM_112030.4"/>
</dbReference>
<dbReference type="SMR" id="F4J8K6"/>
<dbReference type="FunCoup" id="F4J8K6">
    <property type="interactions" value="4163"/>
</dbReference>
<dbReference type="STRING" id="3702.F4J8K6"/>
<dbReference type="GlyGen" id="F4J8K6">
    <property type="glycosylation" value="1 site"/>
</dbReference>
<dbReference type="iPTMnet" id="F4J8K6"/>
<dbReference type="PaxDb" id="3702-AT3G11964.1"/>
<dbReference type="ProteomicsDB" id="226816"/>
<dbReference type="EnsemblPlants" id="AT3G11964.2">
    <property type="protein sequence ID" value="AT3G11964.2"/>
    <property type="gene ID" value="AT3G11964"/>
</dbReference>
<dbReference type="GeneID" id="820370"/>
<dbReference type="Gramene" id="AT3G11964.2">
    <property type="protein sequence ID" value="AT3G11964.2"/>
    <property type="gene ID" value="AT3G11964"/>
</dbReference>
<dbReference type="KEGG" id="ath:AT3G11964"/>
<dbReference type="Araport" id="AT3G11964"/>
<dbReference type="TAIR" id="AT3G11964">
    <property type="gene designation" value="RRP5"/>
</dbReference>
<dbReference type="eggNOG" id="KOG1070">
    <property type="taxonomic scope" value="Eukaryota"/>
</dbReference>
<dbReference type="HOGENOM" id="CLU_000845_1_1_1"/>
<dbReference type="InParanoid" id="F4J8K6"/>
<dbReference type="OMA" id="GQYLRAY"/>
<dbReference type="CD-CODE" id="4299E36E">
    <property type="entry name" value="Nucleolus"/>
</dbReference>
<dbReference type="PRO" id="PR:F4J8K6"/>
<dbReference type="Proteomes" id="UP000006548">
    <property type="component" value="Chromosome 3"/>
</dbReference>
<dbReference type="ExpressionAtlas" id="F4J8K6">
    <property type="expression patterns" value="baseline and differential"/>
</dbReference>
<dbReference type="GO" id="GO:0005730">
    <property type="term" value="C:nucleolus"/>
    <property type="evidence" value="ECO:0000314"/>
    <property type="project" value="TAIR"/>
</dbReference>
<dbReference type="GO" id="GO:0005886">
    <property type="term" value="C:plasma membrane"/>
    <property type="evidence" value="ECO:0007005"/>
    <property type="project" value="TAIR"/>
</dbReference>
<dbReference type="GO" id="GO:1990904">
    <property type="term" value="C:ribonucleoprotein complex"/>
    <property type="evidence" value="ECO:0007669"/>
    <property type="project" value="UniProtKB-KW"/>
</dbReference>
<dbReference type="GO" id="GO:0003676">
    <property type="term" value="F:nucleic acid binding"/>
    <property type="evidence" value="ECO:0007669"/>
    <property type="project" value="InterPro"/>
</dbReference>
<dbReference type="GO" id="GO:0009553">
    <property type="term" value="P:embryo sac development"/>
    <property type="evidence" value="ECO:0000315"/>
    <property type="project" value="TAIR"/>
</dbReference>
<dbReference type="GO" id="GO:0006364">
    <property type="term" value="P:rRNA processing"/>
    <property type="evidence" value="ECO:0000315"/>
    <property type="project" value="TAIR"/>
</dbReference>
<dbReference type="CDD" id="cd05702">
    <property type="entry name" value="S1_Rrp5_repeat_hs11_sc8"/>
    <property type="match status" value="1"/>
</dbReference>
<dbReference type="CDD" id="cd05703">
    <property type="entry name" value="S1_Rrp5_repeat_hs12_sc9"/>
    <property type="match status" value="1"/>
</dbReference>
<dbReference type="CDD" id="cd05693">
    <property type="entry name" value="S1_Rrp5_repeat_hs1_sc1"/>
    <property type="match status" value="1"/>
</dbReference>
<dbReference type="CDD" id="cd05694">
    <property type="entry name" value="S1_Rrp5_repeat_hs2_sc2"/>
    <property type="match status" value="1"/>
</dbReference>
<dbReference type="CDD" id="cd05695">
    <property type="entry name" value="S1_Rrp5_repeat_hs3"/>
    <property type="match status" value="1"/>
</dbReference>
<dbReference type="CDD" id="cd05698">
    <property type="entry name" value="S1_Rrp5_repeat_hs6_sc5"/>
    <property type="match status" value="1"/>
</dbReference>
<dbReference type="CDD" id="cd04461">
    <property type="entry name" value="S1_Rrp5_repeat_hs8_sc7"/>
    <property type="match status" value="1"/>
</dbReference>
<dbReference type="CDD" id="cd05708">
    <property type="entry name" value="S1_Rrp5_repeat_sc12"/>
    <property type="match status" value="1"/>
</dbReference>
<dbReference type="FunFam" id="1.25.40.10:FF:000065">
    <property type="entry name" value="Programmed cell death 11"/>
    <property type="match status" value="1"/>
</dbReference>
<dbReference type="FunFam" id="2.40.50.140:FF:000148">
    <property type="entry name" value="protein RRP5 homolog isoform X1"/>
    <property type="match status" value="1"/>
</dbReference>
<dbReference type="FunFam" id="2.40.50.140:FF:000212">
    <property type="entry name" value="Ribosomal protein S1-like1"/>
    <property type="match status" value="1"/>
</dbReference>
<dbReference type="FunFam" id="2.40.50.140:FF:000263">
    <property type="entry name" value="Ribosomal protein S1-like1"/>
    <property type="match status" value="1"/>
</dbReference>
<dbReference type="FunFam" id="2.40.50.140:FF:000155">
    <property type="entry name" value="rRNA biogenesis protein RRP5"/>
    <property type="match status" value="1"/>
</dbReference>
<dbReference type="FunFam" id="2.40.50.140:FF:000179">
    <property type="entry name" value="rRNA biogenesis protein RRP5"/>
    <property type="match status" value="1"/>
</dbReference>
<dbReference type="FunFam" id="2.40.50.140:FF:000280">
    <property type="entry name" value="rRNA biogenesis protein RRP5"/>
    <property type="match status" value="1"/>
</dbReference>
<dbReference type="FunFam" id="2.40.50.140:FF:000159">
    <property type="entry name" value="rRNA biogenesis protein rrp5"/>
    <property type="match status" value="3"/>
</dbReference>
<dbReference type="Gene3D" id="2.40.50.140">
    <property type="entry name" value="Nucleic acid-binding proteins"/>
    <property type="match status" value="10"/>
</dbReference>
<dbReference type="Gene3D" id="1.25.40.10">
    <property type="entry name" value="Tetratricopeptide repeat domain"/>
    <property type="match status" value="2"/>
</dbReference>
<dbReference type="InterPro" id="IPR003107">
    <property type="entry name" value="HAT"/>
</dbReference>
<dbReference type="InterPro" id="IPR012340">
    <property type="entry name" value="NA-bd_OB-fold"/>
</dbReference>
<dbReference type="InterPro" id="IPR045209">
    <property type="entry name" value="Rrp5"/>
</dbReference>
<dbReference type="InterPro" id="IPR048058">
    <property type="entry name" value="Rrp5_S1_rpt_hs11_sc8"/>
</dbReference>
<dbReference type="InterPro" id="IPR048059">
    <property type="entry name" value="Rrp5_S1_rpt_hs1_sc1"/>
</dbReference>
<dbReference type="InterPro" id="IPR003029">
    <property type="entry name" value="S1_domain"/>
</dbReference>
<dbReference type="InterPro" id="IPR008847">
    <property type="entry name" value="Suf"/>
</dbReference>
<dbReference type="InterPro" id="IPR011990">
    <property type="entry name" value="TPR-like_helical_dom_sf"/>
</dbReference>
<dbReference type="PANTHER" id="PTHR23270">
    <property type="entry name" value="PROGRAMMED CELL DEATH PROTEIN 11 PRE-RRNA PROCESSING PROTEIN RRP5"/>
    <property type="match status" value="1"/>
</dbReference>
<dbReference type="PANTHER" id="PTHR23270:SF10">
    <property type="entry name" value="PROTEIN RRP5 HOMOLOG"/>
    <property type="match status" value="1"/>
</dbReference>
<dbReference type="Pfam" id="PF24682">
    <property type="entry name" value="OB_RRP5"/>
    <property type="match status" value="1"/>
</dbReference>
<dbReference type="Pfam" id="PF24685">
    <property type="entry name" value="OB_RRP5_4th"/>
    <property type="match status" value="1"/>
</dbReference>
<dbReference type="Pfam" id="PF00575">
    <property type="entry name" value="S1"/>
    <property type="match status" value="5"/>
</dbReference>
<dbReference type="Pfam" id="PF23459">
    <property type="entry name" value="S1_RRP5"/>
    <property type="match status" value="4"/>
</dbReference>
<dbReference type="Pfam" id="PF05843">
    <property type="entry name" value="Suf"/>
    <property type="match status" value="1"/>
</dbReference>
<dbReference type="SMART" id="SM00386">
    <property type="entry name" value="HAT"/>
    <property type="match status" value="4"/>
</dbReference>
<dbReference type="SMART" id="SM00316">
    <property type="entry name" value="S1"/>
    <property type="match status" value="15"/>
</dbReference>
<dbReference type="SUPFAM" id="SSF50249">
    <property type="entry name" value="Nucleic acid-binding proteins"/>
    <property type="match status" value="12"/>
</dbReference>
<dbReference type="SUPFAM" id="SSF48452">
    <property type="entry name" value="TPR-like"/>
    <property type="match status" value="2"/>
</dbReference>
<dbReference type="PROSITE" id="PS50126">
    <property type="entry name" value="S1"/>
    <property type="match status" value="14"/>
</dbReference>
<dbReference type="PROSITE" id="PS00283">
    <property type="entry name" value="SOYBEAN_KUNITZ"/>
    <property type="match status" value="1"/>
</dbReference>
<accession>F4J8K6</accession>
<accession>Q9C7B6</accession>
<accession>Q9LHM6</accession>
<accession>Q9SF02</accession>
<evidence type="ECO:0000255" key="1"/>
<evidence type="ECO:0000255" key="2">
    <source>
        <dbReference type="PROSITE-ProRule" id="PRU00180"/>
    </source>
</evidence>
<evidence type="ECO:0000256" key="3">
    <source>
        <dbReference type="SAM" id="MobiDB-lite"/>
    </source>
</evidence>
<evidence type="ECO:0000269" key="4">
    <source>
    </source>
</evidence>
<evidence type="ECO:0000303" key="5">
    <source>
    </source>
</evidence>
<evidence type="ECO:0000305" key="6"/>
<evidence type="ECO:0000312" key="7">
    <source>
        <dbReference type="Araport" id="AT3G11964"/>
    </source>
</evidence>
<evidence type="ECO:0000312" key="8">
    <source>
        <dbReference type="EMBL" id="AAF23213.1"/>
    </source>
</evidence>
<evidence type="ECO:0000312" key="9">
    <source>
        <dbReference type="EMBL" id="AAG51058.1"/>
    </source>
</evidence>
<feature type="chain" id="PRO_0000435322" description="rRNA biogenesis protein RRP5">
    <location>
        <begin position="1"/>
        <end position="1920"/>
    </location>
</feature>
<feature type="domain" description="S1 motif 1" evidence="2">
    <location>
        <begin position="128"/>
        <end position="210"/>
    </location>
</feature>
<feature type="domain" description="S1 motif 2" evidence="2">
    <location>
        <begin position="226"/>
        <end position="291"/>
    </location>
</feature>
<feature type="domain" description="S1 motif 3" evidence="2">
    <location>
        <begin position="314"/>
        <end position="384"/>
    </location>
</feature>
<feature type="domain" description="S1 motif 4" evidence="2">
    <location>
        <begin position="400"/>
        <end position="473"/>
    </location>
</feature>
<feature type="domain" description="S1 motif 5" evidence="2">
    <location>
        <begin position="490"/>
        <end position="557"/>
    </location>
</feature>
<feature type="domain" description="S1 motif 6" evidence="2">
    <location>
        <begin position="577"/>
        <end position="646"/>
    </location>
</feature>
<feature type="domain" description="S1 motif 7" evidence="2">
    <location>
        <begin position="661"/>
        <end position="733"/>
    </location>
</feature>
<feature type="domain" description="S1 motif 8" evidence="2">
    <location>
        <begin position="753"/>
        <end position="822"/>
    </location>
</feature>
<feature type="domain" description="S1 motif 9" evidence="2">
    <location>
        <begin position="866"/>
        <end position="930"/>
    </location>
</feature>
<feature type="domain" description="S1 motif 10" evidence="2">
    <location>
        <begin position="958"/>
        <end position="1031"/>
    </location>
</feature>
<feature type="domain" description="S1 motif 11" evidence="2">
    <location>
        <begin position="1054"/>
        <end position="1129"/>
    </location>
</feature>
<feature type="domain" description="S1 motif 12" evidence="2">
    <location>
        <begin position="1153"/>
        <end position="1224"/>
    </location>
</feature>
<feature type="domain" description="S1 motif 13" evidence="2">
    <location>
        <begin position="1260"/>
        <end position="1334"/>
    </location>
</feature>
<feature type="domain" description="S1 motif 14" evidence="2">
    <location>
        <begin position="1369"/>
        <end position="1438"/>
    </location>
</feature>
<feature type="domain" description="S1 motif 15" evidence="2">
    <location>
        <begin position="1459"/>
        <end position="1529"/>
    </location>
</feature>
<feature type="repeat" description="HAT 1" evidence="1">
    <location>
        <begin position="1651"/>
        <end position="1683"/>
    </location>
</feature>
<feature type="repeat" description="HAT 2" evidence="1">
    <location>
        <begin position="1685"/>
        <end position="1722"/>
    </location>
</feature>
<feature type="repeat" description="HAT 3" evidence="1">
    <location>
        <begin position="1726"/>
        <end position="1758"/>
    </location>
</feature>
<feature type="repeat" description="HAT 4" evidence="1">
    <location>
        <begin position="1759"/>
        <end position="1791"/>
    </location>
</feature>
<feature type="repeat" description="HAT 5" evidence="1">
    <location>
        <begin position="1828"/>
        <end position="1860"/>
    </location>
</feature>
<feature type="repeat" description="HAT 6" evidence="1">
    <location>
        <begin position="1862"/>
        <end position="1897"/>
    </location>
</feature>
<feature type="region of interest" description="Disordered" evidence="3">
    <location>
        <begin position="1"/>
        <end position="65"/>
    </location>
</feature>
<feature type="region of interest" description="Disordered" evidence="3">
    <location>
        <begin position="1535"/>
        <end position="1555"/>
    </location>
</feature>
<feature type="region of interest" description="Disordered" evidence="3">
    <location>
        <begin position="1605"/>
        <end position="1652"/>
    </location>
</feature>
<feature type="compositionally biased region" description="Basic and acidic residues" evidence="3">
    <location>
        <begin position="1620"/>
        <end position="1652"/>
    </location>
</feature>
<protein>
    <recommendedName>
        <fullName evidence="5">rRNA biogenesis protein RRP5</fullName>
        <shortName evidence="5">AtRrp5</shortName>
    </recommendedName>
    <alternativeName>
        <fullName evidence="5">Ribosomal RNA-processing protein 5</fullName>
    </alternativeName>
</protein>
<gene>
    <name evidence="5" type="primary">RRP5</name>
    <name evidence="7" type="ordered locus">At3g11964</name>
    <name evidence="8" type="ORF">F26K24.26</name>
    <name evidence="9" type="ORF">T21B14.19</name>
</gene>
<reference key="1">
    <citation type="journal article" date="2000" name="Nature">
        <title>Sequence and analysis of chromosome 3 of the plant Arabidopsis thaliana.</title>
        <authorList>
            <person name="Salanoubat M."/>
            <person name="Lemcke K."/>
            <person name="Rieger M."/>
            <person name="Ansorge W."/>
            <person name="Unseld M."/>
            <person name="Fartmann B."/>
            <person name="Valle G."/>
            <person name="Bloecker H."/>
            <person name="Perez-Alonso M."/>
            <person name="Obermaier B."/>
            <person name="Delseny M."/>
            <person name="Boutry M."/>
            <person name="Grivell L.A."/>
            <person name="Mache R."/>
            <person name="Puigdomenech P."/>
            <person name="De Simone V."/>
            <person name="Choisne N."/>
            <person name="Artiguenave F."/>
            <person name="Robert C."/>
            <person name="Brottier P."/>
            <person name="Wincker P."/>
            <person name="Cattolico L."/>
            <person name="Weissenbach J."/>
            <person name="Saurin W."/>
            <person name="Quetier F."/>
            <person name="Schaefer M."/>
            <person name="Mueller-Auer S."/>
            <person name="Gabel C."/>
            <person name="Fuchs M."/>
            <person name="Benes V."/>
            <person name="Wurmbach E."/>
            <person name="Drzonek H."/>
            <person name="Erfle H."/>
            <person name="Jordan N."/>
            <person name="Bangert S."/>
            <person name="Wiedelmann R."/>
            <person name="Kranz H."/>
            <person name="Voss H."/>
            <person name="Holland R."/>
            <person name="Brandt P."/>
            <person name="Nyakatura G."/>
            <person name="Vezzi A."/>
            <person name="D'Angelo M."/>
            <person name="Pallavicini A."/>
            <person name="Toppo S."/>
            <person name="Simionati B."/>
            <person name="Conrad A."/>
            <person name="Hornischer K."/>
            <person name="Kauer G."/>
            <person name="Loehnert T.-H."/>
            <person name="Nordsiek G."/>
            <person name="Reichelt J."/>
            <person name="Scharfe M."/>
            <person name="Schoen O."/>
            <person name="Bargues M."/>
            <person name="Terol J."/>
            <person name="Climent J."/>
            <person name="Navarro P."/>
            <person name="Collado C."/>
            <person name="Perez-Perez A."/>
            <person name="Ottenwaelder B."/>
            <person name="Duchemin D."/>
            <person name="Cooke R."/>
            <person name="Laudie M."/>
            <person name="Berger-Llauro C."/>
            <person name="Purnelle B."/>
            <person name="Masuy D."/>
            <person name="de Haan M."/>
            <person name="Maarse A.C."/>
            <person name="Alcaraz J.-P."/>
            <person name="Cottet A."/>
            <person name="Casacuberta E."/>
            <person name="Monfort A."/>
            <person name="Argiriou A."/>
            <person name="Flores M."/>
            <person name="Liguori R."/>
            <person name="Vitale D."/>
            <person name="Mannhaupt G."/>
            <person name="Haase D."/>
            <person name="Schoof H."/>
            <person name="Rudd S."/>
            <person name="Zaccaria P."/>
            <person name="Mewes H.-W."/>
            <person name="Mayer K.F.X."/>
            <person name="Kaul S."/>
            <person name="Town C.D."/>
            <person name="Koo H.L."/>
            <person name="Tallon L.J."/>
            <person name="Jenkins J."/>
            <person name="Rooney T."/>
            <person name="Rizzo M."/>
            <person name="Walts A."/>
            <person name="Utterback T."/>
            <person name="Fujii C.Y."/>
            <person name="Shea T.P."/>
            <person name="Creasy T.H."/>
            <person name="Haas B."/>
            <person name="Maiti R."/>
            <person name="Wu D."/>
            <person name="Peterson J."/>
            <person name="Van Aken S."/>
            <person name="Pai G."/>
            <person name="Militscher J."/>
            <person name="Sellers P."/>
            <person name="Gill J.E."/>
            <person name="Feldblyum T.V."/>
            <person name="Preuss D."/>
            <person name="Lin X."/>
            <person name="Nierman W.C."/>
            <person name="Salzberg S.L."/>
            <person name="White O."/>
            <person name="Venter J.C."/>
            <person name="Fraser C.M."/>
            <person name="Kaneko T."/>
            <person name="Nakamura Y."/>
            <person name="Sato S."/>
            <person name="Kato T."/>
            <person name="Asamizu E."/>
            <person name="Sasamoto S."/>
            <person name="Kimura T."/>
            <person name="Idesawa K."/>
            <person name="Kawashima K."/>
            <person name="Kishida Y."/>
            <person name="Kiyokawa C."/>
            <person name="Kohara M."/>
            <person name="Matsumoto M."/>
            <person name="Matsuno A."/>
            <person name="Muraki A."/>
            <person name="Nakayama S."/>
            <person name="Nakazaki N."/>
            <person name="Shinpo S."/>
            <person name="Takeuchi C."/>
            <person name="Wada T."/>
            <person name="Watanabe A."/>
            <person name="Yamada M."/>
            <person name="Yasuda M."/>
            <person name="Tabata S."/>
        </authorList>
    </citation>
    <scope>NUCLEOTIDE SEQUENCE [LARGE SCALE GENOMIC DNA]</scope>
    <source>
        <strain>cv. Columbia</strain>
    </source>
</reference>
<reference key="2">
    <citation type="journal article" date="2000" name="DNA Res.">
        <title>Structural analysis of Arabidopsis thaliana chromosome 3. II. Sequence features of the 4,251,695 bp regions covered by 90 P1, TAC and BAC clones.</title>
        <authorList>
            <person name="Kaneko T."/>
            <person name="Katoh T."/>
            <person name="Sato S."/>
            <person name="Nakamura Y."/>
            <person name="Asamizu E."/>
            <person name="Tabata S."/>
        </authorList>
    </citation>
    <scope>NUCLEOTIDE SEQUENCE [LARGE SCALE GENOMIC DNA]</scope>
    <source>
        <strain>cv. Columbia</strain>
    </source>
</reference>
<reference key="3">
    <citation type="journal article" date="2017" name="Plant J.">
        <title>Araport11: a complete reannotation of the Arabidopsis thaliana reference genome.</title>
        <authorList>
            <person name="Cheng C.Y."/>
            <person name="Krishnakumar V."/>
            <person name="Chan A.P."/>
            <person name="Thibaud-Nissen F."/>
            <person name="Schobel S."/>
            <person name="Town C.D."/>
        </authorList>
    </citation>
    <scope>GENOME REANNOTATION</scope>
    <source>
        <strain>cv. Columbia</strain>
    </source>
</reference>
<reference key="4">
    <citation type="journal article" date="2013" name="PLoS ONE">
        <title>40S ribosome biogenesis co-factors are essential for gametophyte and embryo development.</title>
        <authorList>
            <person name="Missbach S."/>
            <person name="Weis B.L."/>
            <person name="Martin R."/>
            <person name="Simm S."/>
            <person name="Bohnsack M.T."/>
            <person name="Schleiff E."/>
        </authorList>
    </citation>
    <scope>FUNCTION</scope>
    <scope>SUBCELLULAR LOCATION</scope>
    <scope>TISSUE SPECIFICITY</scope>
    <scope>DISRUPTION PHENOTYPE</scope>
    <source>
        <strain>cv. Columbia</strain>
    </source>
</reference>